<organism>
    <name type="scientific">Macaca mulatta</name>
    <name type="common">Rhesus macaque</name>
    <dbReference type="NCBI Taxonomy" id="9544"/>
    <lineage>
        <taxon>Eukaryota</taxon>
        <taxon>Metazoa</taxon>
        <taxon>Chordata</taxon>
        <taxon>Craniata</taxon>
        <taxon>Vertebrata</taxon>
        <taxon>Euteleostomi</taxon>
        <taxon>Mammalia</taxon>
        <taxon>Eutheria</taxon>
        <taxon>Euarchontoglires</taxon>
        <taxon>Primates</taxon>
        <taxon>Haplorrhini</taxon>
        <taxon>Catarrhini</taxon>
        <taxon>Cercopithecidae</taxon>
        <taxon>Cercopithecinae</taxon>
        <taxon>Macaca</taxon>
    </lineage>
</organism>
<keyword id="KW-0007">Acetylation</keyword>
<keyword id="KW-0963">Cytoplasm</keyword>
<keyword id="KW-0206">Cytoskeleton</keyword>
<keyword id="KW-0342">GTP-binding</keyword>
<keyword id="KW-1017">Isopeptide bond</keyword>
<keyword id="KW-0460">Magnesium</keyword>
<keyword id="KW-0479">Metal-binding</keyword>
<keyword id="KW-0488">Methylation</keyword>
<keyword id="KW-0493">Microtubule</keyword>
<keyword id="KW-0547">Nucleotide-binding</keyword>
<keyword id="KW-0597">Phosphoprotein</keyword>
<keyword id="KW-1185">Reference proteome</keyword>
<keyword id="KW-0832">Ubl conjugation</keyword>
<accession>P69895</accession>
<accession>P05218</accession>
<accession>Q8WUC1</accession>
<accession>Q9CY33</accession>
<comment type="function">
    <text>Tubulin is the major constituent of microtubules, a cylinder consisting of laterally associated linear protofilaments composed of alpha- and beta-tubulin heterodimers. Microtubules grow by the addition of GTP-tubulin dimers to the microtubule end, where a stabilizing cap forms. Below the cap, tubulin dimers are in GDP-bound state, owing to GTPase activity of alpha-tubulin.</text>
</comment>
<comment type="cofactor">
    <cofactor evidence="2">
        <name>Mg(2+)</name>
        <dbReference type="ChEBI" id="CHEBI:18420"/>
    </cofactor>
</comment>
<comment type="subunit">
    <text evidence="1 3 4">Heterodimer of alpha and beta chains. A typical microtubule is a hollow water-filled tube with an outer diameter of 25 nm and an inner diameter of 15 nM. Alpha-beta heterodimers associate head-to-tail to form protofilaments running lengthwise along the microtubule wall with the beta-tubulin subunit facing the microtubule plus end conferring a structural polarity. Microtubules usually have 13 protofilaments but different protofilament numbers can be found in some organisms and specialized cells. Interacts with CIMAP3. Interacts with DIAPH1 (By similarity). Interacts with MX1 (By similarity). May interact with RNABP10 (By similarity). Interacts with CFAP157 (By similarity). Nascent tubulin polypeptide interacts (via beta-tubulin MREI motif) with TTC5/STRAP; this interaction results in tubulin mRNA-targeted degradation (By similarity).</text>
</comment>
<comment type="subcellular location">
    <subcellularLocation>
        <location evidence="1">Cytoplasm</location>
        <location evidence="1">Cytoskeleton</location>
    </subcellularLocation>
</comment>
<comment type="tissue specificity">
    <text>Ubiquitously expressed with highest levels in spleen, thymus and immature brain.</text>
</comment>
<comment type="domain">
    <text evidence="1">The MREI motif is common among all beta-tubulin isoforms and may be critical for tubulin autoregulation.</text>
</comment>
<comment type="PTM">
    <text evidence="4">Some glutamate residues at the C-terminus are polyglycylated, resulting in polyglycine chains on the gamma-carboxyl group. Glycylation is mainly limited to tubulin incorporated into axonemes (cilia and flagella) whereas glutamylation is prevalent in neuronal cells, centrioles, axonemes, and the mitotic spindle. Both modifications can coexist on the same protein on adjacent residues, and lowering polyglycylation levels increases polyglutamylation, and reciprocally. Cilia and flagella glycylation is required for their stability and maintenance. Flagella glycylation controls sperm motility.</text>
</comment>
<comment type="PTM">
    <text evidence="4 7">Some glutamate residues at the C-terminus are polyglutamylated, resulting in polyglutamate chains on the gamma-carboxyl group (By similarity). Polyglutamylation plays a key role in microtubule severing by spastin (SPAST). SPAST preferentially recognizes and acts on microtubules decorated with short polyglutamate tails: severing activity by SPAST increases as the number of glutamates per tubulin rises from one to eight, but decreases beyond this glutamylation threshold (By similarity). Glutamylation is also involved in cilia motility (By similarity).</text>
</comment>
<comment type="PTM">
    <text evidence="1">Phosphorylated on Ser-172 by CDK1 during the cell cycle, from metaphase to telophase, but not in interphase. This phosphorylation inhibits tubulin incorporation into microtubules.</text>
</comment>
<comment type="similarity">
    <text evidence="9">Belongs to the tubulin family.</text>
</comment>
<feature type="chain" id="PRO_0000048244" description="Tubulin beta chain">
    <location>
        <begin position="1"/>
        <end position="444"/>
    </location>
</feature>
<feature type="region of interest" description="Disordered" evidence="8">
    <location>
        <begin position="423"/>
        <end position="444"/>
    </location>
</feature>
<feature type="short sequence motif" description="MREI motif" evidence="1">
    <location>
        <begin position="1"/>
        <end position="4"/>
    </location>
</feature>
<feature type="compositionally biased region" description="Acidic residues" evidence="8">
    <location>
        <begin position="429"/>
        <end position="444"/>
    </location>
</feature>
<feature type="binding site" evidence="5">
    <location>
        <position position="11"/>
    </location>
    <ligand>
        <name>GTP</name>
        <dbReference type="ChEBI" id="CHEBI:37565"/>
    </ligand>
</feature>
<feature type="binding site" evidence="2">
    <location>
        <position position="69"/>
    </location>
    <ligand>
        <name>GTP</name>
        <dbReference type="ChEBI" id="CHEBI:37565"/>
    </ligand>
</feature>
<feature type="binding site" evidence="2">
    <location>
        <position position="69"/>
    </location>
    <ligand>
        <name>Mg(2+)</name>
        <dbReference type="ChEBI" id="CHEBI:18420"/>
    </ligand>
</feature>
<feature type="binding site" evidence="5">
    <location>
        <position position="138"/>
    </location>
    <ligand>
        <name>GTP</name>
        <dbReference type="ChEBI" id="CHEBI:37565"/>
    </ligand>
</feature>
<feature type="binding site" evidence="5">
    <location>
        <position position="142"/>
    </location>
    <ligand>
        <name>GTP</name>
        <dbReference type="ChEBI" id="CHEBI:37565"/>
    </ligand>
</feature>
<feature type="binding site" evidence="5">
    <location>
        <position position="143"/>
    </location>
    <ligand>
        <name>GTP</name>
        <dbReference type="ChEBI" id="CHEBI:37565"/>
    </ligand>
</feature>
<feature type="binding site" evidence="5">
    <location>
        <position position="144"/>
    </location>
    <ligand>
        <name>GTP</name>
        <dbReference type="ChEBI" id="CHEBI:37565"/>
    </ligand>
</feature>
<feature type="binding site" evidence="5">
    <location>
        <position position="204"/>
    </location>
    <ligand>
        <name>GTP</name>
        <dbReference type="ChEBI" id="CHEBI:37565"/>
    </ligand>
</feature>
<feature type="binding site" evidence="5">
    <location>
        <position position="226"/>
    </location>
    <ligand>
        <name>GTP</name>
        <dbReference type="ChEBI" id="CHEBI:37565"/>
    </ligand>
</feature>
<feature type="modified residue" description="Phosphoserine" evidence="4">
    <location>
        <position position="40"/>
    </location>
</feature>
<feature type="modified residue" description="Phosphothreonine" evidence="1">
    <location>
        <position position="55"/>
    </location>
</feature>
<feature type="modified residue" description="N6-acetyllysine; alternate" evidence="1">
    <location>
        <position position="58"/>
    </location>
</feature>
<feature type="modified residue" description="N6-succinyllysine; alternate" evidence="4">
    <location>
        <position position="58"/>
    </location>
</feature>
<feature type="modified residue" description="Phosphoserine; by CDK1" evidence="1">
    <location>
        <position position="172"/>
    </location>
</feature>
<feature type="modified residue" description="Phosphothreonine" evidence="1">
    <location>
        <position position="285"/>
    </location>
</feature>
<feature type="modified residue" description="Phosphothreonine" evidence="1">
    <location>
        <position position="290"/>
    </location>
</feature>
<feature type="modified residue" description="Omega-N-methylarginine" evidence="1">
    <location>
        <position position="318"/>
    </location>
</feature>
<feature type="modified residue" description="5-glutamyl polyglutamate" evidence="1">
    <location>
        <position position="434"/>
    </location>
</feature>
<feature type="modified residue" description="5-glutamyl glycine" evidence="1">
    <location>
        <position position="438"/>
    </location>
</feature>
<feature type="modified residue" description="5-glutamyl polyglutamate" evidence="6">
    <location>
        <position position="438"/>
    </location>
</feature>
<feature type="modified residue" description="5-glutamyl glycine" evidence="1">
    <location>
        <position position="439"/>
    </location>
</feature>
<feature type="modified residue" description="5-glutamyl polyglutamate" evidence="1">
    <location>
        <position position="439"/>
    </location>
</feature>
<feature type="modified residue" description="5-glutamyl glycine" evidence="1">
    <location>
        <position position="441"/>
    </location>
</feature>
<feature type="modified residue" description="5-glutamyl polyglutamate" evidence="1">
    <location>
        <position position="441"/>
    </location>
</feature>
<feature type="modified residue" description="5-glutamyl glycine" evidence="1">
    <location>
        <position position="442"/>
    </location>
</feature>
<feature type="modified residue" description="5-glutamyl glycine" evidence="1">
    <location>
        <position position="443"/>
    </location>
</feature>
<feature type="cross-link" description="Glycyl lysine isopeptide (Lys-Gly) (interchain with G-Cter in ubiquitin); alternate" evidence="1">
    <location>
        <position position="58"/>
    </location>
</feature>
<feature type="cross-link" description="Glycyl lysine isopeptide (Lys-Gly) (interchain with G-Cter in ubiquitin)" evidence="1">
    <location>
        <position position="324"/>
    </location>
</feature>
<protein>
    <recommendedName>
        <fullName>Tubulin beta chain</fullName>
    </recommendedName>
    <alternativeName>
        <fullName>Tubulin beta-5 chain</fullName>
    </alternativeName>
</protein>
<reference key="1">
    <citation type="journal article" date="2001" name="Bioorg. Med. Chem.">
        <title>Tubulins in the primate retina: evidence that xanthophylls may be endogenous ligands for the paclitaxel-binding site.</title>
        <authorList>
            <person name="Crabtree D.V."/>
            <person name="Ojima I."/>
            <person name="Geng X."/>
            <person name="Adler A.J."/>
        </authorList>
    </citation>
    <scope>NUCLEOTIDE SEQUENCE [MRNA]</scope>
    <source>
        <tissue>Retina</tissue>
    </source>
</reference>
<dbReference type="EMBL" id="AF147880">
    <property type="protein sequence ID" value="AAD33992.1"/>
    <property type="molecule type" value="mRNA"/>
</dbReference>
<dbReference type="RefSeq" id="NP_001027985.1">
    <property type="nucleotide sequence ID" value="NM_001032813.1"/>
</dbReference>
<dbReference type="SMR" id="P69895"/>
<dbReference type="FunCoup" id="P69895">
    <property type="interactions" value="2130"/>
</dbReference>
<dbReference type="STRING" id="9544.ENSMMUP00000076820"/>
<dbReference type="PaxDb" id="9544-ENSMMUP00000031199"/>
<dbReference type="Ensembl" id="ENSMMUT00000081244.1">
    <property type="protein sequence ID" value="ENSMMUP00000070801.1"/>
    <property type="gene ID" value="ENSMMUG00000030028.3"/>
</dbReference>
<dbReference type="GeneID" id="574113"/>
<dbReference type="KEGG" id="mcc:574113"/>
<dbReference type="CTD" id="203068"/>
<dbReference type="VEuPathDB" id="HostDB:ENSMMUG00000030028"/>
<dbReference type="VGNC" id="VGNC:104438">
    <property type="gene designation" value="TUBB"/>
</dbReference>
<dbReference type="eggNOG" id="KOG1375">
    <property type="taxonomic scope" value="Eukaryota"/>
</dbReference>
<dbReference type="GeneTree" id="ENSGT00940000154370"/>
<dbReference type="HOGENOM" id="CLU_015718_1_1_1"/>
<dbReference type="InParanoid" id="P69895"/>
<dbReference type="OrthoDB" id="1662883at2759"/>
<dbReference type="TreeFam" id="TF300298"/>
<dbReference type="Proteomes" id="UP000006718">
    <property type="component" value="Chromosome 4"/>
</dbReference>
<dbReference type="Bgee" id="ENSMMUG00000030028">
    <property type="expression patterns" value="Expressed in dorsolateral prefrontal cortex and 21 other cell types or tissues"/>
</dbReference>
<dbReference type="ExpressionAtlas" id="P69895">
    <property type="expression patterns" value="baseline"/>
</dbReference>
<dbReference type="GO" id="GO:0005737">
    <property type="term" value="C:cytoplasm"/>
    <property type="evidence" value="ECO:0000318"/>
    <property type="project" value="GO_Central"/>
</dbReference>
<dbReference type="GO" id="GO:0045171">
    <property type="term" value="C:intercellular bridge"/>
    <property type="evidence" value="ECO:0007669"/>
    <property type="project" value="UniProtKB-ARBA"/>
</dbReference>
<dbReference type="GO" id="GO:0005874">
    <property type="term" value="C:microtubule"/>
    <property type="evidence" value="ECO:0000318"/>
    <property type="project" value="GO_Central"/>
</dbReference>
<dbReference type="GO" id="GO:0072686">
    <property type="term" value="C:mitotic spindle"/>
    <property type="evidence" value="ECO:0007669"/>
    <property type="project" value="UniProtKB-ARBA"/>
</dbReference>
<dbReference type="GO" id="GO:0005525">
    <property type="term" value="F:GTP binding"/>
    <property type="evidence" value="ECO:0000318"/>
    <property type="project" value="GO_Central"/>
</dbReference>
<dbReference type="GO" id="GO:0003924">
    <property type="term" value="F:GTPase activity"/>
    <property type="evidence" value="ECO:0007669"/>
    <property type="project" value="InterPro"/>
</dbReference>
<dbReference type="GO" id="GO:0046872">
    <property type="term" value="F:metal ion binding"/>
    <property type="evidence" value="ECO:0007669"/>
    <property type="project" value="UniProtKB-KW"/>
</dbReference>
<dbReference type="GO" id="GO:0005200">
    <property type="term" value="F:structural constituent of cytoskeleton"/>
    <property type="evidence" value="ECO:0000318"/>
    <property type="project" value="GO_Central"/>
</dbReference>
<dbReference type="GO" id="GO:0000226">
    <property type="term" value="P:microtubule cytoskeleton organization"/>
    <property type="evidence" value="ECO:0000318"/>
    <property type="project" value="GO_Central"/>
</dbReference>
<dbReference type="GO" id="GO:0000278">
    <property type="term" value="P:mitotic cell cycle"/>
    <property type="evidence" value="ECO:0000318"/>
    <property type="project" value="GO_Central"/>
</dbReference>
<dbReference type="CDD" id="cd02187">
    <property type="entry name" value="beta_tubulin"/>
    <property type="match status" value="1"/>
</dbReference>
<dbReference type="FunFam" id="1.10.287.600:FF:000002">
    <property type="entry name" value="Tubulin beta chain"/>
    <property type="match status" value="1"/>
</dbReference>
<dbReference type="FunFam" id="3.30.1330.20:FF:000002">
    <property type="entry name" value="Tubulin beta chain"/>
    <property type="match status" value="1"/>
</dbReference>
<dbReference type="FunFam" id="3.40.50.1440:FF:000003">
    <property type="entry name" value="Tubulin beta chain"/>
    <property type="match status" value="1"/>
</dbReference>
<dbReference type="Gene3D" id="1.10.287.600">
    <property type="entry name" value="Helix hairpin bin"/>
    <property type="match status" value="1"/>
</dbReference>
<dbReference type="Gene3D" id="3.30.1330.20">
    <property type="entry name" value="Tubulin/FtsZ, C-terminal domain"/>
    <property type="match status" value="1"/>
</dbReference>
<dbReference type="Gene3D" id="3.40.50.1440">
    <property type="entry name" value="Tubulin/FtsZ, GTPase domain"/>
    <property type="match status" value="1"/>
</dbReference>
<dbReference type="InterPro" id="IPR013838">
    <property type="entry name" value="Beta-tubulin_BS"/>
</dbReference>
<dbReference type="InterPro" id="IPR002453">
    <property type="entry name" value="Beta_tubulin"/>
</dbReference>
<dbReference type="InterPro" id="IPR008280">
    <property type="entry name" value="Tub_FtsZ_C"/>
</dbReference>
<dbReference type="InterPro" id="IPR000217">
    <property type="entry name" value="Tubulin"/>
</dbReference>
<dbReference type="InterPro" id="IPR037103">
    <property type="entry name" value="Tubulin/FtsZ-like_C"/>
</dbReference>
<dbReference type="InterPro" id="IPR018316">
    <property type="entry name" value="Tubulin/FtsZ_2-layer-sand-dom"/>
</dbReference>
<dbReference type="InterPro" id="IPR036525">
    <property type="entry name" value="Tubulin/FtsZ_GTPase_sf"/>
</dbReference>
<dbReference type="InterPro" id="IPR023123">
    <property type="entry name" value="Tubulin_C"/>
</dbReference>
<dbReference type="InterPro" id="IPR017975">
    <property type="entry name" value="Tubulin_CS"/>
</dbReference>
<dbReference type="InterPro" id="IPR003008">
    <property type="entry name" value="Tubulin_FtsZ_GTPase"/>
</dbReference>
<dbReference type="PANTHER" id="PTHR11588">
    <property type="entry name" value="TUBULIN"/>
    <property type="match status" value="1"/>
</dbReference>
<dbReference type="Pfam" id="PF00091">
    <property type="entry name" value="Tubulin"/>
    <property type="match status" value="1"/>
</dbReference>
<dbReference type="Pfam" id="PF03953">
    <property type="entry name" value="Tubulin_C"/>
    <property type="match status" value="1"/>
</dbReference>
<dbReference type="PRINTS" id="PR01163">
    <property type="entry name" value="BETATUBULIN"/>
</dbReference>
<dbReference type="PRINTS" id="PR01161">
    <property type="entry name" value="TUBULIN"/>
</dbReference>
<dbReference type="SMART" id="SM00864">
    <property type="entry name" value="Tubulin"/>
    <property type="match status" value="1"/>
</dbReference>
<dbReference type="SMART" id="SM00865">
    <property type="entry name" value="Tubulin_C"/>
    <property type="match status" value="1"/>
</dbReference>
<dbReference type="SUPFAM" id="SSF55307">
    <property type="entry name" value="Tubulin C-terminal domain-like"/>
    <property type="match status" value="1"/>
</dbReference>
<dbReference type="SUPFAM" id="SSF52490">
    <property type="entry name" value="Tubulin nucleotide-binding domain-like"/>
    <property type="match status" value="1"/>
</dbReference>
<dbReference type="PROSITE" id="PS00227">
    <property type="entry name" value="TUBULIN"/>
    <property type="match status" value="1"/>
</dbReference>
<dbReference type="PROSITE" id="PS00228">
    <property type="entry name" value="TUBULIN_B_AUTOREG"/>
    <property type="match status" value="1"/>
</dbReference>
<gene>
    <name type="primary">TUBB</name>
    <name type="synonym">TUBB5</name>
</gene>
<evidence type="ECO:0000250" key="1">
    <source>
        <dbReference type="UniProtKB" id="P07437"/>
    </source>
</evidence>
<evidence type="ECO:0000250" key="2">
    <source>
        <dbReference type="UniProtKB" id="P68363"/>
    </source>
</evidence>
<evidence type="ECO:0000250" key="3">
    <source>
        <dbReference type="UniProtKB" id="P69893"/>
    </source>
</evidence>
<evidence type="ECO:0000250" key="4">
    <source>
        <dbReference type="UniProtKB" id="P99024"/>
    </source>
</evidence>
<evidence type="ECO:0000250" key="5">
    <source>
        <dbReference type="UniProtKB" id="Q13509"/>
    </source>
</evidence>
<evidence type="ECO:0000250" key="6">
    <source>
        <dbReference type="UniProtKB" id="Q2T9S0"/>
    </source>
</evidence>
<evidence type="ECO:0000250" key="7">
    <source>
        <dbReference type="UniProtKB" id="Q71U36"/>
    </source>
</evidence>
<evidence type="ECO:0000256" key="8">
    <source>
        <dbReference type="SAM" id="MobiDB-lite"/>
    </source>
</evidence>
<evidence type="ECO:0000305" key="9"/>
<proteinExistence type="evidence at transcript level"/>
<name>TBB5_MACMU</name>
<sequence>MREIVHIQAGQCGNQIGAKFWEVISDEHGIDPTGTYHGDSDLQLDRISVYYNEATGGKYVPRAILVDLEPGTMDSVRSGPFGQIFRPDNFVFGQSGAGNNWAKGHYTEGAELVDSVLDVVRKEAESCDCLQGFQLTHSLGGGTGSGMGTLLISKIREEYPDRIMNTFSVVPSPKVSDTVVEPYNATLSVHQLVENTDETYCIDNEALYDICFRTLKLTTPTYGDLNHLVSATMSGVTTCLRFPGQLNADLRKLAVNMVPFPRLHFFMPGFAPLTSRGSQQYRALTVPELTQQVFDAKNMMAACDPRHGRYLTVAAVFRGRMSMKEVDEQMLNVQNKNSSYFVEWIPNNVKTAVCDIPPRGLKMAVTFIGNSTAIQELFKRISEQFTAMFRRKAFLHWYTGEGMDEMEFTEAESNMNDLVSEYQQYQDATAEEEEDFGEEAEEEA</sequence>